<proteinExistence type="evidence at protein level"/>
<sequence length="483" mass="54705">MSKEDFVIKPEAAGASTDTSEWPLLLKNFDKLLVRSGHYTPIPAGSSPLKRDLKSYISSGVINLDKPSNPSSHEVVAWIKRILRCEKTGHSGTLDPKVTGCLIVCIDRATRLVKSQQGAGKEYVCIVRLHDALKDEKDLGRSLENLTGALFQRPPLISAVKRQLRVRTIYESNLIEFDNKRNLGVFWASCEAGTYMRTLCVHLGMLLGVGGHMQELRRVRSGALSENDNMVTLHDVMDAQWVYDNTRDESYLRSIIQPLETLLVGYKRIVVKDSAVNAVCYGAKLMIPGLLRYEEGIELYDEIVLITTKGEAIAVAIAQMSTVDLASCDHGVVASVKRCIMERDLYPRRWGLGPVAQKKKQMKADGKLDKYGRVNENTPEQWKKEYVPLDNAEQSTSSSQETKETEEEPKKAKEDSLIKEVETEKEEVKEDDSKKEKKEKKDKKEKKEKKEKKDKKEKKEKKEKKRKSEDGDSEEKKSKKSKK</sequence>
<name>CBF5_YEAST</name>
<accession>P33322</accession>
<accession>D6VYH9</accession>
<dbReference type="EC" id="5.4.99.-" evidence="12 13"/>
<dbReference type="EMBL" id="L12351">
    <property type="protein sequence ID" value="AAA34473.1"/>
    <property type="molecule type" value="Genomic_DNA"/>
</dbReference>
<dbReference type="EMBL" id="U17246">
    <property type="protein sequence ID" value="AAB67463.1"/>
    <property type="molecule type" value="Genomic_DNA"/>
</dbReference>
<dbReference type="EMBL" id="BK006945">
    <property type="protein sequence ID" value="DAA09495.1"/>
    <property type="molecule type" value="Genomic_DNA"/>
</dbReference>
<dbReference type="PIR" id="S41853">
    <property type="entry name" value="S41853"/>
</dbReference>
<dbReference type="RefSeq" id="NP_013276.1">
    <property type="nucleotide sequence ID" value="NM_001182062.1"/>
</dbReference>
<dbReference type="PDB" id="3U28">
    <property type="method" value="X-ray"/>
    <property type="resolution" value="1.90 A"/>
    <property type="chains" value="A=3-394"/>
</dbReference>
<dbReference type="PDB" id="3UAI">
    <property type="method" value="X-ray"/>
    <property type="resolution" value="3.06 A"/>
    <property type="chains" value="A=3-394"/>
</dbReference>
<dbReference type="PDB" id="3ZV0">
    <property type="method" value="X-ray"/>
    <property type="resolution" value="2.80 A"/>
    <property type="chains" value="C/D=1-60, C/D=258-386"/>
</dbReference>
<dbReference type="PDBsum" id="3U28"/>
<dbReference type="PDBsum" id="3UAI"/>
<dbReference type="PDBsum" id="3ZV0"/>
<dbReference type="SMR" id="P33322"/>
<dbReference type="BioGRID" id="31446">
    <property type="interactions" value="365"/>
</dbReference>
<dbReference type="ComplexPortal" id="CPX-737">
    <property type="entry name" value="Box H/ACA ribonucleoprotein complex"/>
</dbReference>
<dbReference type="DIP" id="DIP-4472N"/>
<dbReference type="FunCoup" id="P33322">
    <property type="interactions" value="1953"/>
</dbReference>
<dbReference type="IntAct" id="P33322">
    <property type="interactions" value="122"/>
</dbReference>
<dbReference type="MINT" id="P33322"/>
<dbReference type="STRING" id="4932.YLR175W"/>
<dbReference type="iPTMnet" id="P33322"/>
<dbReference type="PaxDb" id="4932-YLR175W"/>
<dbReference type="PeptideAtlas" id="P33322"/>
<dbReference type="EnsemblFungi" id="YLR175W_mRNA">
    <property type="protein sequence ID" value="YLR175W"/>
    <property type="gene ID" value="YLR175W"/>
</dbReference>
<dbReference type="GeneID" id="850872"/>
<dbReference type="KEGG" id="sce:YLR175W"/>
<dbReference type="AGR" id="SGD:S000004165"/>
<dbReference type="SGD" id="S000004165">
    <property type="gene designation" value="CBF5"/>
</dbReference>
<dbReference type="VEuPathDB" id="FungiDB:YLR175W"/>
<dbReference type="eggNOG" id="KOG2529">
    <property type="taxonomic scope" value="Eukaryota"/>
</dbReference>
<dbReference type="GeneTree" id="ENSGT00510000047092"/>
<dbReference type="HOGENOM" id="CLU_032087_3_2_1"/>
<dbReference type="InParanoid" id="P33322"/>
<dbReference type="OMA" id="KYGRTNE"/>
<dbReference type="OrthoDB" id="10250002at2759"/>
<dbReference type="BioCyc" id="MetaCyc:YLR175W-MONOMER"/>
<dbReference type="BioCyc" id="YEAST:YLR175W-MONOMER"/>
<dbReference type="Reactome" id="R-SCE-171319">
    <property type="pathway name" value="Telomere Extension By Telomerase"/>
</dbReference>
<dbReference type="BioGRID-ORCS" id="850872">
    <property type="hits" value="3 hits in 10 CRISPR screens"/>
</dbReference>
<dbReference type="CD-CODE" id="BDAE0F88">
    <property type="entry name" value="Nucleolus"/>
</dbReference>
<dbReference type="EvolutionaryTrace" id="P33322"/>
<dbReference type="PRO" id="PR:P33322"/>
<dbReference type="Proteomes" id="UP000002311">
    <property type="component" value="Chromosome XII"/>
</dbReference>
<dbReference type="RNAct" id="P33322">
    <property type="molecule type" value="protein"/>
</dbReference>
<dbReference type="GO" id="GO:0030686">
    <property type="term" value="C:90S preribosome"/>
    <property type="evidence" value="ECO:0007005"/>
    <property type="project" value="SGD"/>
</dbReference>
<dbReference type="GO" id="GO:0031429">
    <property type="term" value="C:box H/ACA snoRNP complex"/>
    <property type="evidence" value="ECO:0000314"/>
    <property type="project" value="UniProtKB"/>
</dbReference>
<dbReference type="GO" id="GO:0000775">
    <property type="term" value="C:chromosome, centromeric region"/>
    <property type="evidence" value="ECO:0007669"/>
    <property type="project" value="UniProtKB-SubCell"/>
</dbReference>
<dbReference type="GO" id="GO:0005737">
    <property type="term" value="C:cytoplasm"/>
    <property type="evidence" value="ECO:0007669"/>
    <property type="project" value="UniProtKB-KW"/>
</dbReference>
<dbReference type="GO" id="GO:0005874">
    <property type="term" value="C:microtubule"/>
    <property type="evidence" value="ECO:0007669"/>
    <property type="project" value="UniProtKB-KW"/>
</dbReference>
<dbReference type="GO" id="GO:0003677">
    <property type="term" value="F:DNA binding"/>
    <property type="evidence" value="ECO:0007669"/>
    <property type="project" value="UniProtKB-KW"/>
</dbReference>
<dbReference type="GO" id="GO:0003729">
    <property type="term" value="F:mRNA binding"/>
    <property type="evidence" value="ECO:0007005"/>
    <property type="project" value="SGD"/>
</dbReference>
<dbReference type="GO" id="GO:0009982">
    <property type="term" value="F:pseudouridine synthase activity"/>
    <property type="evidence" value="ECO:0000314"/>
    <property type="project" value="UniProtKB"/>
</dbReference>
<dbReference type="GO" id="GO:0106032">
    <property type="term" value="F:snRNA pseudouridine synthase activity"/>
    <property type="evidence" value="ECO:0007669"/>
    <property type="project" value="RHEA"/>
</dbReference>
<dbReference type="GO" id="GO:0000495">
    <property type="term" value="P:box H/ACA sno(s)RNA 3'-end processing"/>
    <property type="evidence" value="ECO:0000315"/>
    <property type="project" value="SGD"/>
</dbReference>
<dbReference type="GO" id="GO:0051301">
    <property type="term" value="P:cell division"/>
    <property type="evidence" value="ECO:0007669"/>
    <property type="project" value="UniProtKB-KW"/>
</dbReference>
<dbReference type="GO" id="GO:1990481">
    <property type="term" value="P:mRNA pseudouridine synthesis"/>
    <property type="evidence" value="ECO:0000315"/>
    <property type="project" value="SGD"/>
</dbReference>
<dbReference type="GO" id="GO:0000154">
    <property type="term" value="P:rRNA modification"/>
    <property type="evidence" value="ECO:0000315"/>
    <property type="project" value="UniProtKB"/>
</dbReference>
<dbReference type="GO" id="GO:0006364">
    <property type="term" value="P:rRNA processing"/>
    <property type="evidence" value="ECO:0000315"/>
    <property type="project" value="SGD"/>
</dbReference>
<dbReference type="GO" id="GO:0031118">
    <property type="term" value="P:rRNA pseudouridine synthesis"/>
    <property type="evidence" value="ECO:0000315"/>
    <property type="project" value="SGD"/>
</dbReference>
<dbReference type="GO" id="GO:0000454">
    <property type="term" value="P:snoRNA guided rRNA pseudouridine synthesis"/>
    <property type="evidence" value="ECO:0000314"/>
    <property type="project" value="ComplexPortal"/>
</dbReference>
<dbReference type="GO" id="GO:0031120">
    <property type="term" value="P:snRNA pseudouridine synthesis"/>
    <property type="evidence" value="ECO:0000314"/>
    <property type="project" value="SGD"/>
</dbReference>
<dbReference type="CDD" id="cd02572">
    <property type="entry name" value="PseudoU_synth_hDyskerin"/>
    <property type="match status" value="1"/>
</dbReference>
<dbReference type="CDD" id="cd21148">
    <property type="entry name" value="PUA_Cbf5"/>
    <property type="match status" value="1"/>
</dbReference>
<dbReference type="DisProt" id="DP02055"/>
<dbReference type="FunFam" id="3.30.2350.10:FF:000001">
    <property type="entry name" value="H/ACA ribonucleoprotein complex subunit CBF5"/>
    <property type="match status" value="1"/>
</dbReference>
<dbReference type="Gene3D" id="3.30.2350.10">
    <property type="entry name" value="Pseudouridine synthase"/>
    <property type="match status" value="1"/>
</dbReference>
<dbReference type="Gene3D" id="2.30.130.10">
    <property type="entry name" value="PUA domain"/>
    <property type="match status" value="1"/>
</dbReference>
<dbReference type="InterPro" id="IPR012960">
    <property type="entry name" value="Dyskerin-like"/>
</dbReference>
<dbReference type="InterPro" id="IPR020103">
    <property type="entry name" value="PsdUridine_synth_cat_dom_sf"/>
</dbReference>
<dbReference type="InterPro" id="IPR002501">
    <property type="entry name" value="PsdUridine_synth_N"/>
</dbReference>
<dbReference type="InterPro" id="IPR002478">
    <property type="entry name" value="PUA"/>
</dbReference>
<dbReference type="InterPro" id="IPR015947">
    <property type="entry name" value="PUA-like_sf"/>
</dbReference>
<dbReference type="InterPro" id="IPR036974">
    <property type="entry name" value="PUA_sf"/>
</dbReference>
<dbReference type="InterPro" id="IPR004802">
    <property type="entry name" value="tRNA_PsdUridine_synth_B_fam"/>
</dbReference>
<dbReference type="InterPro" id="IPR032819">
    <property type="entry name" value="TruB_C"/>
</dbReference>
<dbReference type="InterPro" id="IPR004521">
    <property type="entry name" value="Uncharacterised_CHP00451"/>
</dbReference>
<dbReference type="NCBIfam" id="TIGR00425">
    <property type="entry name" value="CBF5"/>
    <property type="match status" value="1"/>
</dbReference>
<dbReference type="NCBIfam" id="NF003280">
    <property type="entry name" value="PRK04270.1"/>
    <property type="match status" value="1"/>
</dbReference>
<dbReference type="NCBIfam" id="TIGR00451">
    <property type="entry name" value="unchar_dom_2"/>
    <property type="match status" value="1"/>
</dbReference>
<dbReference type="PANTHER" id="PTHR23127">
    <property type="entry name" value="CENTROMERE/MICROTUBULE BINDING PROTEIN CBF5"/>
    <property type="match status" value="1"/>
</dbReference>
<dbReference type="PANTHER" id="PTHR23127:SF0">
    <property type="entry name" value="H_ACA RIBONUCLEOPROTEIN COMPLEX SUBUNIT DKC1"/>
    <property type="match status" value="1"/>
</dbReference>
<dbReference type="Pfam" id="PF08068">
    <property type="entry name" value="DKCLD"/>
    <property type="match status" value="1"/>
</dbReference>
<dbReference type="Pfam" id="PF01472">
    <property type="entry name" value="PUA"/>
    <property type="match status" value="1"/>
</dbReference>
<dbReference type="Pfam" id="PF16198">
    <property type="entry name" value="TruB_C_2"/>
    <property type="match status" value="1"/>
</dbReference>
<dbReference type="Pfam" id="PF01509">
    <property type="entry name" value="TruB_N"/>
    <property type="match status" value="1"/>
</dbReference>
<dbReference type="SMART" id="SM01136">
    <property type="entry name" value="DKCLD"/>
    <property type="match status" value="1"/>
</dbReference>
<dbReference type="SMART" id="SM00359">
    <property type="entry name" value="PUA"/>
    <property type="match status" value="1"/>
</dbReference>
<dbReference type="SUPFAM" id="SSF55120">
    <property type="entry name" value="Pseudouridine synthase"/>
    <property type="match status" value="1"/>
</dbReference>
<dbReference type="SUPFAM" id="SSF88697">
    <property type="entry name" value="PUA domain-like"/>
    <property type="match status" value="1"/>
</dbReference>
<dbReference type="PROSITE" id="PS50890">
    <property type="entry name" value="PUA"/>
    <property type="match status" value="1"/>
</dbReference>
<protein>
    <recommendedName>
        <fullName>H/ACA ribonucleoprotein complex subunit CBF5</fullName>
        <ecNumber evidence="12 13">5.4.99.-</ecNumber>
    </recommendedName>
    <alternativeName>
        <fullName>Centromere-binding factor 5</fullName>
    </alternativeName>
    <alternativeName>
        <fullName>Centromere/microtubule-binding protein CBF5</fullName>
    </alternativeName>
    <alternativeName>
        <fullName>H/ACA snoRNP protein CBF5</fullName>
    </alternativeName>
    <alternativeName>
        <fullName>Small nucleolar RNP protein CBF5</fullName>
    </alternativeName>
    <alternativeName>
        <fullName>p64'</fullName>
    </alternativeName>
</protein>
<feature type="chain" id="PRO_0000121982" description="H/ACA ribonucleoprotein complex subunit CBF5">
    <location>
        <begin position="1"/>
        <end position="483"/>
    </location>
</feature>
<feature type="domain" description="PUA" evidence="2">
    <location>
        <begin position="266"/>
        <end position="341"/>
    </location>
</feature>
<feature type="repeat" description="1">
    <location>
        <begin position="434"/>
        <end position="436"/>
    </location>
</feature>
<feature type="repeat" description="2">
    <location>
        <begin position="437"/>
        <end position="439"/>
    </location>
</feature>
<feature type="repeat" description="3">
    <location>
        <begin position="440"/>
        <end position="442"/>
    </location>
</feature>
<feature type="repeat" description="4">
    <location>
        <begin position="443"/>
        <end position="445"/>
    </location>
</feature>
<feature type="repeat" description="5">
    <location>
        <begin position="446"/>
        <end position="448"/>
    </location>
</feature>
<feature type="repeat" description="6">
    <location>
        <begin position="449"/>
        <end position="451"/>
    </location>
</feature>
<feature type="repeat" description="7">
    <location>
        <begin position="452"/>
        <end position="454"/>
    </location>
</feature>
<feature type="repeat" description="8">
    <location>
        <begin position="455"/>
        <end position="457"/>
    </location>
</feature>
<feature type="repeat" description="9">
    <location>
        <begin position="458"/>
        <end position="460"/>
    </location>
</feature>
<feature type="repeat" description="10">
    <location>
        <begin position="461"/>
        <end position="463"/>
    </location>
</feature>
<feature type="region of interest" description="Disordered" evidence="3">
    <location>
        <begin position="357"/>
        <end position="483"/>
    </location>
</feature>
<feature type="region of interest" description="10 X 3 AA tandem repeats of K-K-[DE]">
    <location>
        <begin position="434"/>
        <end position="463"/>
    </location>
</feature>
<feature type="compositionally biased region" description="Basic and acidic residues" evidence="3">
    <location>
        <begin position="362"/>
        <end position="373"/>
    </location>
</feature>
<feature type="compositionally biased region" description="Basic and acidic residues" evidence="3">
    <location>
        <begin position="408"/>
        <end position="436"/>
    </location>
</feature>
<feature type="compositionally biased region" description="Basic residues" evidence="3">
    <location>
        <begin position="437"/>
        <end position="465"/>
    </location>
</feature>
<feature type="compositionally biased region" description="Basic and acidic residues" evidence="3">
    <location>
        <begin position="466"/>
        <end position="477"/>
    </location>
</feature>
<feature type="active site" description="Nucleophile" evidence="1">
    <location>
        <position position="95"/>
    </location>
</feature>
<feature type="modified residue" description="Phosphoserine" evidence="23">
    <location>
        <position position="47"/>
    </location>
</feature>
<feature type="modified residue" description="Phosphothreonine" evidence="20 21 22 23">
    <location>
        <position position="378"/>
    </location>
</feature>
<feature type="cross-link" description="Glycyl lysine isopeptide (Lys-Gly) (interchain with G-Cter in ubiquitin)" evidence="24">
    <location>
        <position position="9"/>
    </location>
</feature>
<feature type="cross-link" description="Glycyl lysine isopeptide (Lys-Gly) (interchain with G-Cter in ubiquitin)" evidence="24">
    <location>
        <position position="267"/>
    </location>
</feature>
<feature type="mutagenesis site" description="Reduced pseudouridylation of rRNA and reduced snoRNA levels." evidence="4">
    <original>D</original>
    <variation>A</variation>
    <location>
        <position position="65"/>
    </location>
</feature>
<feature type="mutagenesis site" description="Reduced pseudouridylation of rRNA." evidence="4">
    <original>L</original>
    <variation>A</variation>
    <location>
        <position position="94"/>
    </location>
</feature>
<feature type="mutagenesis site" description="Abolished pseudouridylation of rRNA. Abolishes pseudouridylation at position 93 in U2 snRNA." evidence="4 12">
    <original>D</original>
    <variation>A</variation>
    <location>
        <position position="95"/>
    </location>
</feature>
<feature type="helix" evidence="25">
    <location>
        <begin position="24"/>
        <end position="26"/>
    </location>
</feature>
<feature type="helix" evidence="25">
    <location>
        <begin position="29"/>
        <end position="31"/>
    </location>
</feature>
<feature type="strand" evidence="25">
    <location>
        <begin position="32"/>
        <end position="35"/>
    </location>
</feature>
<feature type="helix" evidence="25">
    <location>
        <begin position="48"/>
        <end position="50"/>
    </location>
</feature>
<feature type="helix" evidence="25">
    <location>
        <begin position="53"/>
        <end position="58"/>
    </location>
</feature>
<feature type="strand" evidence="25">
    <location>
        <begin position="60"/>
        <end position="66"/>
    </location>
</feature>
<feature type="strand" evidence="25">
    <location>
        <begin position="68"/>
        <end position="70"/>
    </location>
</feature>
<feature type="helix" evidence="25">
    <location>
        <begin position="72"/>
        <end position="83"/>
    </location>
</feature>
<feature type="strand" evidence="25">
    <location>
        <begin position="88"/>
        <end position="92"/>
    </location>
</feature>
<feature type="strand" evidence="26">
    <location>
        <begin position="94"/>
        <end position="97"/>
    </location>
</feature>
<feature type="strand" evidence="25">
    <location>
        <begin position="99"/>
        <end position="106"/>
    </location>
</feature>
<feature type="helix" evidence="25">
    <location>
        <begin position="107"/>
        <end position="112"/>
    </location>
</feature>
<feature type="helix" evidence="25">
    <location>
        <begin position="113"/>
        <end position="118"/>
    </location>
</feature>
<feature type="strand" evidence="25">
    <location>
        <begin position="121"/>
        <end position="131"/>
    </location>
</feature>
<feature type="helix" evidence="25">
    <location>
        <begin position="138"/>
        <end position="145"/>
    </location>
</feature>
<feature type="strand" evidence="25">
    <location>
        <begin position="148"/>
        <end position="152"/>
    </location>
</feature>
<feature type="strand" evidence="25">
    <location>
        <begin position="165"/>
        <end position="178"/>
    </location>
</feature>
<feature type="turn" evidence="25">
    <location>
        <begin position="179"/>
        <end position="182"/>
    </location>
</feature>
<feature type="strand" evidence="25">
    <location>
        <begin position="183"/>
        <end position="190"/>
    </location>
</feature>
<feature type="helix" evidence="25">
    <location>
        <begin position="196"/>
        <end position="207"/>
    </location>
</feature>
<feature type="strand" evidence="25">
    <location>
        <begin position="211"/>
        <end position="221"/>
    </location>
</feature>
<feature type="helix" evidence="25">
    <location>
        <begin position="233"/>
        <end position="246"/>
    </location>
</feature>
<feature type="helix" evidence="25">
    <location>
        <begin position="250"/>
        <end position="255"/>
    </location>
</feature>
<feature type="strand" evidence="26">
    <location>
        <begin position="256"/>
        <end position="258"/>
    </location>
</feature>
<feature type="helix" evidence="25">
    <location>
        <begin position="259"/>
        <end position="263"/>
    </location>
</feature>
<feature type="strand" evidence="25">
    <location>
        <begin position="268"/>
        <end position="271"/>
    </location>
</feature>
<feature type="helix" evidence="25">
    <location>
        <begin position="273"/>
        <end position="275"/>
    </location>
</feature>
<feature type="helix" evidence="25">
    <location>
        <begin position="276"/>
        <end position="282"/>
    </location>
</feature>
<feature type="strand" evidence="25">
    <location>
        <begin position="283"/>
        <end position="286"/>
    </location>
</feature>
<feature type="helix" evidence="25">
    <location>
        <begin position="287"/>
        <end position="289"/>
    </location>
</feature>
<feature type="strand" evidence="25">
    <location>
        <begin position="290"/>
        <end position="293"/>
    </location>
</feature>
<feature type="strand" evidence="25">
    <location>
        <begin position="302"/>
        <end position="306"/>
    </location>
</feature>
<feature type="strand" evidence="25">
    <location>
        <begin position="312"/>
        <end position="320"/>
    </location>
</feature>
<feature type="helix" evidence="25">
    <location>
        <begin position="322"/>
        <end position="327"/>
    </location>
</feature>
<feature type="strand" evidence="25">
    <location>
        <begin position="329"/>
        <end position="339"/>
    </location>
</feature>
<feature type="helix" evidence="27">
    <location>
        <begin position="355"/>
        <end position="365"/>
    </location>
</feature>
<gene>
    <name type="primary">CBF5</name>
    <name type="ordered locus">YLR175W</name>
    <name type="ORF">L9470.11</name>
</gene>
<evidence type="ECO:0000250" key="1">
    <source>
        <dbReference type="UniProtKB" id="P60340"/>
    </source>
</evidence>
<evidence type="ECO:0000255" key="2">
    <source>
        <dbReference type="PROSITE-ProRule" id="PRU00161"/>
    </source>
</evidence>
<evidence type="ECO:0000256" key="3">
    <source>
        <dbReference type="SAM" id="MobiDB-lite"/>
    </source>
</evidence>
<evidence type="ECO:0000269" key="4">
    <source>
    </source>
</evidence>
<evidence type="ECO:0000269" key="5">
    <source>
    </source>
</evidence>
<evidence type="ECO:0000269" key="6">
    <source>
    </source>
</evidence>
<evidence type="ECO:0000269" key="7">
    <source>
    </source>
</evidence>
<evidence type="ECO:0000269" key="8">
    <source>
    </source>
</evidence>
<evidence type="ECO:0000269" key="9">
    <source>
    </source>
</evidence>
<evidence type="ECO:0000269" key="10">
    <source>
    </source>
</evidence>
<evidence type="ECO:0000269" key="11">
    <source>
    </source>
</evidence>
<evidence type="ECO:0000269" key="12">
    <source>
    </source>
</evidence>
<evidence type="ECO:0000269" key="13">
    <source>
    </source>
</evidence>
<evidence type="ECO:0000269" key="14">
    <source>
    </source>
</evidence>
<evidence type="ECO:0000269" key="15">
    <source>
    </source>
</evidence>
<evidence type="ECO:0000269" key="16">
    <source>
    </source>
</evidence>
<evidence type="ECO:0000269" key="17">
    <source>
    </source>
</evidence>
<evidence type="ECO:0000305" key="18"/>
<evidence type="ECO:0000305" key="19">
    <source>
    </source>
</evidence>
<evidence type="ECO:0007744" key="20">
    <source>
    </source>
</evidence>
<evidence type="ECO:0007744" key="21">
    <source>
    </source>
</evidence>
<evidence type="ECO:0007744" key="22">
    <source>
    </source>
</evidence>
<evidence type="ECO:0007744" key="23">
    <source>
    </source>
</evidence>
<evidence type="ECO:0007744" key="24">
    <source>
    </source>
</evidence>
<evidence type="ECO:0007829" key="25">
    <source>
        <dbReference type="PDB" id="3U28"/>
    </source>
</evidence>
<evidence type="ECO:0007829" key="26">
    <source>
        <dbReference type="PDB" id="3UAI"/>
    </source>
</evidence>
<evidence type="ECO:0007829" key="27">
    <source>
        <dbReference type="PDB" id="3ZV0"/>
    </source>
</evidence>
<comment type="function">
    <text evidence="4 12 13 14 15 16 17">Catalytic subunit of H/ACA small nucleolar ribonucleoprotein (H/ACA snoRNP) complex, which catalyzes pseudouridylation of rRNA (PubMed:10523634, PubMed:9315678, PubMed:9472021, PubMed:9848653). This involves the isomerization of uridine such that the ribose is subsequently attached to C5, instead of the normal N1 (PubMed:10523634, PubMed:9315678, PubMed:9472021, PubMed:9848653). Pseudouridine ('psi') residues may serve to stabilize the conformation of rRNAs and play a central role in ribosomal RNA processing (PubMed:10523634, PubMed:9315678, PubMed:9472021, PubMed:9848653). The H/ACA snoRNP complex also mediates pseudouridylation of other types of RNAs (PubMed:21131909, PubMed:25219674). Catalyzes pseudouridylation at position 93 in U2 snRNA (PubMed:21131909). Also catalyzes pseudouridylation of mRNAs; H/ACA-type snoRNAs probably guide pseudouridylation of mRNAs (PubMed:25219674). It is a centromeric DNA-CBF3-binding factor which is involved in mitotic chromosome segregation (PubMed:8336724). Essential for cell growth (PubMed:8336724).</text>
</comment>
<comment type="catalytic activity">
    <reaction evidence="18">
        <text>uridine in 5S rRNA = pseudouridine in 5S rRNA</text>
        <dbReference type="Rhea" id="RHEA:47036"/>
        <dbReference type="Rhea" id="RHEA-COMP:11730"/>
        <dbReference type="Rhea" id="RHEA-COMP:11731"/>
        <dbReference type="ChEBI" id="CHEBI:65314"/>
        <dbReference type="ChEBI" id="CHEBI:65315"/>
    </reaction>
</comment>
<comment type="catalytic activity">
    <reaction evidence="12">
        <text>uridine in snRNA = pseudouridine in snRNA</text>
        <dbReference type="Rhea" id="RHEA:51124"/>
        <dbReference type="Rhea" id="RHEA-COMP:12891"/>
        <dbReference type="Rhea" id="RHEA-COMP:12892"/>
        <dbReference type="ChEBI" id="CHEBI:65314"/>
        <dbReference type="ChEBI" id="CHEBI:65315"/>
    </reaction>
</comment>
<comment type="catalytic activity">
    <reaction evidence="13">
        <text>a uridine in mRNA = a pseudouridine in mRNA</text>
        <dbReference type="Rhea" id="RHEA:56644"/>
        <dbReference type="Rhea" id="RHEA-COMP:14658"/>
        <dbReference type="Rhea" id="RHEA-COMP:14659"/>
        <dbReference type="ChEBI" id="CHEBI:65314"/>
        <dbReference type="ChEBI" id="CHEBI:65315"/>
    </reaction>
</comment>
<comment type="subunit">
    <text evidence="5 6 7 10 11 12 16 17">Component of the small nucleolar ribonucleoprotein particles containing H/ACA-type snoRNAs (H/ACA snoRNPs) (PubMed:15388873, PubMed:21131909, PubMed:9472021, PubMed:9848653). The protein component of the H/ACA snoRNP contains CBF5, GAR1, NHP2 and NOP10 (PubMed:15388873, PubMed:9472021, PubMed:9848653). The complex contains a stable core composed of CBF5 and NOP10, to which GAR1 and NHP2 subsequently bind (PubMed:15388873, PubMed:9472021, PubMed:9848653). Also interacts with NAF1 and SHQ1, which may be required for assembly of H/ACA snoRNP complexes. May also associate with the CBF3 110 kDa subunit (CBF2). Interacts with the trimethylguanosine synthase (TGS1) and with NOP53.</text>
</comment>
<comment type="interaction">
    <interactant intactId="EBI-4105">
        <id>P33322</id>
    </interactant>
    <interactant intactId="EBI-28887">
        <id>P53919</id>
        <label>NAF1</label>
    </interactant>
    <organismsDiffer>false</organismsDiffer>
    <experiments>7</experiments>
</comment>
<comment type="interaction">
    <interactant intactId="EBI-4105">
        <id>P33322</id>
    </interactant>
    <interactant intactId="EBI-12014">
        <id>P32495</id>
        <label>NHP2</label>
    </interactant>
    <organismsDiffer>false</organismsDiffer>
    <experiments>12</experiments>
</comment>
<comment type="interaction">
    <interactant intactId="EBI-4105">
        <id>P33322</id>
    </interactant>
    <interactant intactId="EBI-32695">
        <id>Q07623</id>
        <label>NOP6</label>
    </interactant>
    <organismsDiffer>false</organismsDiffer>
    <experiments>2</experiments>
</comment>
<comment type="subcellular location">
    <subcellularLocation>
        <location evidence="8">Nucleus</location>
        <location evidence="8">Nucleolus</location>
    </subcellularLocation>
    <subcellularLocation>
        <location evidence="8">Chromosome</location>
        <location evidence="8">Centromere</location>
    </subcellularLocation>
    <subcellularLocation>
        <location evidence="19">Cytoplasm</location>
        <location evidence="19">Cytoskeleton</location>
    </subcellularLocation>
</comment>
<comment type="miscellaneous">
    <text evidence="9">Present with 33600 molecules/cell in log phase SD medium.</text>
</comment>
<comment type="similarity">
    <text evidence="18">Belongs to the pseudouridine synthase TruB family.</text>
</comment>
<keyword id="KW-0002">3D-structure</keyword>
<keyword id="KW-0131">Cell cycle</keyword>
<keyword id="KW-0132">Cell division</keyword>
<keyword id="KW-0137">Centromere</keyword>
<keyword id="KW-0158">Chromosome</keyword>
<keyword id="KW-0963">Cytoplasm</keyword>
<keyword id="KW-0206">Cytoskeleton</keyword>
<keyword id="KW-0903">Direct protein sequencing</keyword>
<keyword id="KW-0238">DNA-binding</keyword>
<keyword id="KW-0413">Isomerase</keyword>
<keyword id="KW-1017">Isopeptide bond</keyword>
<keyword id="KW-0493">Microtubule</keyword>
<keyword id="KW-0498">Mitosis</keyword>
<keyword id="KW-0539">Nucleus</keyword>
<keyword id="KW-0597">Phosphoprotein</keyword>
<keyword id="KW-1185">Reference proteome</keyword>
<keyword id="KW-0677">Repeat</keyword>
<keyword id="KW-0687">Ribonucleoprotein</keyword>
<keyword id="KW-0690">Ribosome biogenesis</keyword>
<keyword id="KW-0694">RNA-binding</keyword>
<keyword id="KW-0698">rRNA processing</keyword>
<keyword id="KW-0832">Ubl conjugation</keyword>
<organism>
    <name type="scientific">Saccharomyces cerevisiae (strain ATCC 204508 / S288c)</name>
    <name type="common">Baker's yeast</name>
    <dbReference type="NCBI Taxonomy" id="559292"/>
    <lineage>
        <taxon>Eukaryota</taxon>
        <taxon>Fungi</taxon>
        <taxon>Dikarya</taxon>
        <taxon>Ascomycota</taxon>
        <taxon>Saccharomycotina</taxon>
        <taxon>Saccharomycetes</taxon>
        <taxon>Saccharomycetales</taxon>
        <taxon>Saccharomycetaceae</taxon>
        <taxon>Saccharomyces</taxon>
    </lineage>
</organism>
<reference key="1">
    <citation type="journal article" date="1993" name="Mol. Cell. Biol.">
        <title>An essential yeast protein, CBF5p, binds in vitro to centromeres and microtubules.</title>
        <authorList>
            <person name="Jiang W."/>
            <person name="Middleton K."/>
            <person name="Yoon H.-J."/>
            <person name="Fouquet C."/>
            <person name="Carbon J."/>
        </authorList>
    </citation>
    <scope>NUCLEOTIDE SEQUENCE [GENOMIC DNA]</scope>
    <scope>PARTIAL PROTEIN SEQUENCE</scope>
    <scope>FUNCTION</scope>
</reference>
<reference key="2">
    <citation type="journal article" date="1997" name="Nature">
        <title>The nucleotide sequence of Saccharomyces cerevisiae chromosome XII.</title>
        <authorList>
            <person name="Johnston M."/>
            <person name="Hillier L.W."/>
            <person name="Riles L."/>
            <person name="Albermann K."/>
            <person name="Andre B."/>
            <person name="Ansorge W."/>
            <person name="Benes V."/>
            <person name="Brueckner M."/>
            <person name="Delius H."/>
            <person name="Dubois E."/>
            <person name="Duesterhoeft A."/>
            <person name="Entian K.-D."/>
            <person name="Floeth M."/>
            <person name="Goffeau A."/>
            <person name="Hebling U."/>
            <person name="Heumann K."/>
            <person name="Heuss-Neitzel D."/>
            <person name="Hilbert H."/>
            <person name="Hilger F."/>
            <person name="Kleine K."/>
            <person name="Koetter P."/>
            <person name="Louis E.J."/>
            <person name="Messenguy F."/>
            <person name="Mewes H.-W."/>
            <person name="Miosga T."/>
            <person name="Moestl D."/>
            <person name="Mueller-Auer S."/>
            <person name="Nentwich U."/>
            <person name="Obermaier B."/>
            <person name="Piravandi E."/>
            <person name="Pohl T.M."/>
            <person name="Portetelle D."/>
            <person name="Purnelle B."/>
            <person name="Rechmann S."/>
            <person name="Rieger M."/>
            <person name="Rinke M."/>
            <person name="Rose M."/>
            <person name="Scharfe M."/>
            <person name="Scherens B."/>
            <person name="Scholler P."/>
            <person name="Schwager C."/>
            <person name="Schwarz S."/>
            <person name="Underwood A.P."/>
            <person name="Urrestarazu L.A."/>
            <person name="Vandenbol M."/>
            <person name="Verhasselt P."/>
            <person name="Vierendeels F."/>
            <person name="Voet M."/>
            <person name="Volckaert G."/>
            <person name="Voss H."/>
            <person name="Wambutt R."/>
            <person name="Wedler E."/>
            <person name="Wedler H."/>
            <person name="Zimmermann F.K."/>
            <person name="Zollner A."/>
            <person name="Hani J."/>
            <person name="Hoheisel J.D."/>
        </authorList>
    </citation>
    <scope>NUCLEOTIDE SEQUENCE [LARGE SCALE GENOMIC DNA]</scope>
    <source>
        <strain>ATCC 204508 / S288c</strain>
    </source>
</reference>
<reference key="3">
    <citation type="journal article" date="2014" name="G3 (Bethesda)">
        <title>The reference genome sequence of Saccharomyces cerevisiae: Then and now.</title>
        <authorList>
            <person name="Engel S.R."/>
            <person name="Dietrich F.S."/>
            <person name="Fisk D.G."/>
            <person name="Binkley G."/>
            <person name="Balakrishnan R."/>
            <person name="Costanzo M.C."/>
            <person name="Dwight S.S."/>
            <person name="Hitz B.C."/>
            <person name="Karra K."/>
            <person name="Nash R.S."/>
            <person name="Weng S."/>
            <person name="Wong E.D."/>
            <person name="Lloyd P."/>
            <person name="Skrzypek M.S."/>
            <person name="Miyasato S.R."/>
            <person name="Simison M."/>
            <person name="Cherry J.M."/>
        </authorList>
    </citation>
    <scope>GENOME REANNOTATION</scope>
    <source>
        <strain>ATCC 204508 / S288c</strain>
    </source>
</reference>
<reference key="4">
    <citation type="journal article" date="1997" name="Mol. Cell. Biol.">
        <title>The yeast nucleolar protein Cbf5p is involved in rRNA biosynthesis and interacts genetically with the RNA polymerase I transcription factor RRN3.</title>
        <authorList>
            <person name="Cadwell C."/>
            <person name="Yoon H.-J."/>
            <person name="Zebarjadian Y."/>
            <person name="Carbon J."/>
        </authorList>
    </citation>
    <scope>FUNCTION</scope>
</reference>
<reference key="5">
    <citation type="journal article" date="1998" name="Genes Dev.">
        <title>The box H + ACA snoRNAs carry Cbf5p, the putative rRNA pseudouridine synthase.</title>
        <authorList>
            <person name="Lafontaine D.L."/>
            <person name="Bousquet-Antonelli C."/>
            <person name="Henry Y."/>
            <person name="Caizergues-Ferrer M."/>
            <person name="Tollervey D."/>
        </authorList>
    </citation>
    <scope>FUNCTION</scope>
    <scope>IDENTIFICATION IN H/ACA SNORNP COMPLEXES</scope>
</reference>
<reference key="6">
    <citation type="journal article" date="1998" name="RNA">
        <title>Cbf5p, a potential pseudouridine synthase, and Nhp2p, a putative RNA-binding protein, are present together with Gar1p in all H BOX/ACA-motif snoRNPs and constitute a common bipartite structure.</title>
        <authorList>
            <person name="Watkins N.J."/>
            <person name="Gottschalk A."/>
            <person name="Neubauer G."/>
            <person name="Kastner B."/>
            <person name="Fabrizio P."/>
            <person name="Mann M."/>
            <person name="Luehrmann R."/>
        </authorList>
    </citation>
    <scope>FUNCTION</scope>
    <scope>IDENTIFICATION BY MASS SPECTROMETRY</scope>
    <scope>IDENTIFICATION IN H/ACA SNORNP COMPLEX</scope>
</reference>
<reference key="7">
    <citation type="journal article" date="1999" name="Mol. Cell. Biol.">
        <title>Point mutations in yeast CBF5 can abolish in vivo pseudouridylation of rRNA.</title>
        <authorList>
            <person name="Zebarjadian Y."/>
            <person name="King T."/>
            <person name="Fournier M.J."/>
            <person name="Clarke L."/>
            <person name="Carbon J."/>
        </authorList>
    </citation>
    <scope>FUNCTION</scope>
    <scope>MUTAGENESIS OF ASP-65; LEU-94 AND ASP-95</scope>
</reference>
<reference key="8">
    <citation type="journal article" date="2002" name="J. Biol. Chem.">
        <title>The Shq1p.Naf1p complex is required for box H/ACA small nucleolar ribonucleoprotein particle biogenesis.</title>
        <authorList>
            <person name="Yang P.K."/>
            <person name="Rotondo G."/>
            <person name="Porras T."/>
            <person name="Legrain P."/>
            <person name="Chanfreau G."/>
        </authorList>
    </citation>
    <scope>INTERACTION WITH SHQ1</scope>
</reference>
<reference key="9">
    <citation type="journal article" date="2002" name="Mol. Cell">
        <title>Hypermethylation of the cap structure of both yeast snRNAs and snoRNAs requires a conserved methyltransferase that is localized to the nucleolus.</title>
        <authorList>
            <person name="Mouaikel J."/>
            <person name="Verheggen C."/>
            <person name="Bertrand E."/>
            <person name="Tazi J."/>
            <person name="Bordonne R."/>
        </authorList>
    </citation>
    <scope>INTERACTION WITH TGS1</scope>
</reference>
<reference key="10">
    <citation type="journal article" date="2002" name="RNA">
        <title>Naf1 p is a box H/ACA snoRNP assembly factor.</title>
        <authorList>
            <person name="Fatica A."/>
            <person name="Dlakic M."/>
            <person name="Tollervey D."/>
        </authorList>
    </citation>
    <scope>INTERACTION WITH NAF1</scope>
</reference>
<reference key="11">
    <citation type="journal article" date="2003" name="Mol. Cell">
        <title>Assigning function to yeast proteins by integration of technologies.</title>
        <authorList>
            <person name="Hazbun T.R."/>
            <person name="Malmstroem L."/>
            <person name="Anderson S."/>
            <person name="Graczyk B.J."/>
            <person name="Fox B."/>
            <person name="Riffle M."/>
            <person name="Sundin B.A."/>
            <person name="Aranda J.D."/>
            <person name="McDonald W.H."/>
            <person name="Chiu C.-H."/>
            <person name="Snydsman B.E."/>
            <person name="Bradley P."/>
            <person name="Muller E.G.D."/>
            <person name="Fields S."/>
            <person name="Baker D."/>
            <person name="Yates J.R. III"/>
            <person name="Davis T.N."/>
        </authorList>
    </citation>
    <scope>IDENTIFICATION BY MASS SPECTROMETRY</scope>
</reference>
<reference key="12">
    <citation type="journal article" date="2003" name="Nature">
        <title>Global analysis of protein localization in budding yeast.</title>
        <authorList>
            <person name="Huh W.-K."/>
            <person name="Falvo J.V."/>
            <person name="Gerke L.C."/>
            <person name="Carroll A.S."/>
            <person name="Howson R.W."/>
            <person name="Weissman J.S."/>
            <person name="O'Shea E.K."/>
        </authorList>
    </citation>
    <scope>SUBCELLULAR LOCATION [LARGE SCALE ANALYSIS]</scope>
</reference>
<reference key="13">
    <citation type="journal article" date="2003" name="Nature">
        <title>Global analysis of protein expression in yeast.</title>
        <authorList>
            <person name="Ghaemmaghami S."/>
            <person name="Huh W.-K."/>
            <person name="Bower K."/>
            <person name="Howson R.W."/>
            <person name="Belle A."/>
            <person name="Dephoure N."/>
            <person name="O'Shea E.K."/>
            <person name="Weissman J.S."/>
        </authorList>
    </citation>
    <scope>LEVEL OF PROTEIN EXPRESSION [LARGE SCALE ANALYSIS]</scope>
</reference>
<reference key="14">
    <citation type="journal article" date="2004" name="RNA">
        <title>Cbf5p, the putative pseudouridine synthase of H/ACA-type snoRNPs, can form a complex with Gar1p and Nop10p in absence of Nhp2p and box H/ACA snoRNAs.</title>
        <authorList>
            <person name="Henras A.K."/>
            <person name="Capeyrou R."/>
            <person name="Henry Y."/>
            <person name="Caizergues-Ferrer M."/>
        </authorList>
    </citation>
    <scope>CHARACTERIZATION OF THE H/ACA SNORNP COMPLEX</scope>
</reference>
<reference key="15">
    <citation type="journal article" date="2005" name="Biochem. J.">
        <title>Nop53p is a novel nucleolar 60S ribosomal subunit biogenesis protein.</title>
        <authorList>
            <person name="Sydorskyy Y."/>
            <person name="Dilworth D.J."/>
            <person name="Halloran B."/>
            <person name="Yi E.C."/>
            <person name="Makhnevych T."/>
            <person name="Wozniak R.W."/>
            <person name="Aitchison J.D."/>
        </authorList>
    </citation>
    <scope>INTERACTION WITH NOP53</scope>
    <scope>IDENTIFICATION BY MASS SPECTROMETRY</scope>
</reference>
<reference key="16">
    <citation type="journal article" date="2007" name="J. Proteome Res.">
        <title>Large-scale phosphorylation analysis of alpha-factor-arrested Saccharomyces cerevisiae.</title>
        <authorList>
            <person name="Li X."/>
            <person name="Gerber S.A."/>
            <person name="Rudner A.D."/>
            <person name="Beausoleil S.A."/>
            <person name="Haas W."/>
            <person name="Villen J."/>
            <person name="Elias J.E."/>
            <person name="Gygi S.P."/>
        </authorList>
    </citation>
    <scope>PHOSPHORYLATION [LARGE SCALE ANALYSIS] AT THR-378</scope>
    <scope>IDENTIFICATION BY MASS SPECTROMETRY [LARGE SCALE ANALYSIS]</scope>
    <source>
        <strain>ADR376</strain>
    </source>
</reference>
<reference key="17">
    <citation type="journal article" date="2007" name="Proc. Natl. Acad. Sci. U.S.A.">
        <title>Analysis of phosphorylation sites on proteins from Saccharomyces cerevisiae by electron transfer dissociation (ETD) mass spectrometry.</title>
        <authorList>
            <person name="Chi A."/>
            <person name="Huttenhower C."/>
            <person name="Geer L.Y."/>
            <person name="Coon J.J."/>
            <person name="Syka J.E.P."/>
            <person name="Bai D.L."/>
            <person name="Shabanowitz J."/>
            <person name="Burke D.J."/>
            <person name="Troyanskaya O.G."/>
            <person name="Hunt D.F."/>
        </authorList>
    </citation>
    <scope>PHOSPHORYLATION [LARGE SCALE ANALYSIS] AT THR-378</scope>
    <scope>IDENTIFICATION BY MASS SPECTROMETRY [LARGE SCALE ANALYSIS]</scope>
</reference>
<reference key="18">
    <citation type="journal article" date="2008" name="Mol. Cell. Proteomics">
        <title>A multidimensional chromatography technology for in-depth phosphoproteome analysis.</title>
        <authorList>
            <person name="Albuquerque C.P."/>
            <person name="Smolka M.B."/>
            <person name="Payne S.H."/>
            <person name="Bafna V."/>
            <person name="Eng J."/>
            <person name="Zhou H."/>
        </authorList>
    </citation>
    <scope>PHOSPHORYLATION [LARGE SCALE ANALYSIS] AT THR-378</scope>
    <scope>IDENTIFICATION BY MASS SPECTROMETRY [LARGE SCALE ANALYSIS]</scope>
</reference>
<reference key="19">
    <citation type="journal article" date="2009" name="Science">
        <title>Global analysis of Cdk1 substrate phosphorylation sites provides insights into evolution.</title>
        <authorList>
            <person name="Holt L.J."/>
            <person name="Tuch B.B."/>
            <person name="Villen J."/>
            <person name="Johnson A.D."/>
            <person name="Gygi S.P."/>
            <person name="Morgan D.O."/>
        </authorList>
    </citation>
    <scope>PHOSPHORYLATION [LARGE SCALE ANALYSIS] AT SER-47 AND THR-378</scope>
    <scope>IDENTIFICATION BY MASS SPECTROMETRY [LARGE SCALE ANALYSIS]</scope>
</reference>
<reference key="20">
    <citation type="journal article" date="2011" name="EMBO J.">
        <title>U2 snRNA is inducibly pseudouridylated at novel sites by Pus7p and snR81 RNP.</title>
        <authorList>
            <person name="Wu G."/>
            <person name="Xiao M."/>
            <person name="Yang C."/>
            <person name="Yu Y.T."/>
        </authorList>
    </citation>
    <scope>FUNCTION</scope>
    <scope>IDENTIFICATION IN THE H/ACA SNORNP COMPLEX</scope>
    <scope>CATALYTIC ACTIVITY</scope>
    <scope>MUTAGENESIS OF ASP-95</scope>
</reference>
<reference key="21">
    <citation type="journal article" date="2012" name="Proteomics">
        <title>Sites of ubiquitin attachment in Saccharomyces cerevisiae.</title>
        <authorList>
            <person name="Starita L.M."/>
            <person name="Lo R.S."/>
            <person name="Eng J.K."/>
            <person name="von Haller P.D."/>
            <person name="Fields S."/>
        </authorList>
    </citation>
    <scope>UBIQUITINATION [LARGE SCALE ANALYSIS] AT LYS-9 AND LYS-267</scope>
    <scope>IDENTIFICATION BY MASS SPECTROMETRY [LARGE SCALE ANALYSIS]</scope>
</reference>
<reference key="22">
    <citation type="journal article" date="2014" name="Cell">
        <title>Transcriptome-wide mapping reveals widespread dynamic-regulated pseudouridylation of ncRNA and mRNA.</title>
        <authorList>
            <person name="Schwartz S."/>
            <person name="Bernstein D.A."/>
            <person name="Mumbach M.R."/>
            <person name="Jovanovic M."/>
            <person name="Herbst R.H."/>
            <person name="Leon-Ricardo B.X."/>
            <person name="Engreitz J.M."/>
            <person name="Guttman M."/>
            <person name="Satija R."/>
            <person name="Lander E.S."/>
            <person name="Fink G."/>
            <person name="Regev A."/>
        </authorList>
    </citation>
    <scope>FUNCTION</scope>
    <scope>CATALYTIC ACTIVITY</scope>
</reference>